<proteinExistence type="evidence at protein level"/>
<sequence>MAKKPSKKKVKRQVASGRAYIHASYNNTIVTITDPDGNPITWSSGGVIGYKGSRKGTPYAAQLAALDAAKKAMAYGMQSVDVIVRGTGAGREQAIRALQASGLQVKSIVDDTPVPHNGCRPKKKFRKAS</sequence>
<gene>
    <name type="primary">rpsK</name>
    <name type="synonym">rps11</name>
    <name type="ordered locus">TT_C1302</name>
</gene>
<accession>P62654</accession>
<feature type="initiator methionine" description="Removed" evidence="1">
    <location>
        <position position="1"/>
    </location>
</feature>
<feature type="chain" id="PRO_0000123245" description="Small ribosomal subunit protein uS11">
    <location>
        <begin position="2"/>
        <end position="129"/>
    </location>
</feature>
<feature type="region of interest" description="Disordered" evidence="2">
    <location>
        <begin position="109"/>
        <end position="129"/>
    </location>
</feature>
<feature type="compositionally biased region" description="Basic residues" evidence="2">
    <location>
        <begin position="119"/>
        <end position="129"/>
    </location>
</feature>
<feature type="strand" evidence="5">
    <location>
        <begin position="15"/>
        <end position="23"/>
    </location>
</feature>
<feature type="strand" evidence="5">
    <location>
        <begin position="28"/>
        <end position="33"/>
    </location>
</feature>
<feature type="strand" evidence="6">
    <location>
        <begin position="35"/>
        <end position="37"/>
    </location>
</feature>
<feature type="strand" evidence="5">
    <location>
        <begin position="39"/>
        <end position="44"/>
    </location>
</feature>
<feature type="helix" evidence="5">
    <location>
        <begin position="45"/>
        <end position="48"/>
    </location>
</feature>
<feature type="helix" evidence="5">
    <location>
        <begin position="54"/>
        <end position="56"/>
    </location>
</feature>
<feature type="helix" evidence="5">
    <location>
        <begin position="58"/>
        <end position="74"/>
    </location>
</feature>
<feature type="strand" evidence="5">
    <location>
        <begin position="79"/>
        <end position="86"/>
    </location>
</feature>
<feature type="helix" evidence="5">
    <location>
        <begin position="91"/>
        <end position="100"/>
    </location>
</feature>
<feature type="strand" evidence="5">
    <location>
        <begin position="103"/>
        <end position="110"/>
    </location>
</feature>
<feature type="strand" evidence="4">
    <location>
        <begin position="123"/>
        <end position="125"/>
    </location>
</feature>
<evidence type="ECO:0000250" key="1"/>
<evidence type="ECO:0000256" key="2">
    <source>
        <dbReference type="SAM" id="MobiDB-lite"/>
    </source>
</evidence>
<evidence type="ECO:0000305" key="3"/>
<evidence type="ECO:0007829" key="4">
    <source>
        <dbReference type="PDB" id="4V63"/>
    </source>
</evidence>
<evidence type="ECO:0007829" key="5">
    <source>
        <dbReference type="PDB" id="4V67"/>
    </source>
</evidence>
<evidence type="ECO:0007829" key="6">
    <source>
        <dbReference type="PDB" id="4V84"/>
    </source>
</evidence>
<protein>
    <recommendedName>
        <fullName evidence="3">Small ribosomal subunit protein uS11</fullName>
    </recommendedName>
    <alternativeName>
        <fullName>30S ribosomal protein S11</fullName>
    </alternativeName>
</protein>
<comment type="function">
    <text evidence="1">Located on the upper part of the platform of the 30S subunit, where it bridges several disparate RNA helices of the 16S rRNA. Forms part of the Shine-Dalgarno cleft in the 70S ribosome (By similarity).</text>
</comment>
<comment type="subunit">
    <text>Part of the 30S ribosomal subunit. Interacts with proteins S7 and S18. Binds to the C-terminus of IF-3; however exactly how IF-3 interacts with the 30S subunit is unclear.</text>
</comment>
<comment type="similarity">
    <text evidence="3">Belongs to the universal ribosomal protein uS11 family.</text>
</comment>
<keyword id="KW-0002">3D-structure</keyword>
<keyword id="KW-0687">Ribonucleoprotein</keyword>
<keyword id="KW-0689">Ribosomal protein</keyword>
<keyword id="KW-0694">RNA-binding</keyword>
<keyword id="KW-0699">rRNA-binding</keyword>
<reference key="1">
    <citation type="journal article" date="2004" name="Nat. Biotechnol.">
        <title>The genome sequence of the extreme thermophile Thermus thermophilus.</title>
        <authorList>
            <person name="Henne A."/>
            <person name="Brueggemann H."/>
            <person name="Raasch C."/>
            <person name="Wiezer A."/>
            <person name="Hartsch T."/>
            <person name="Liesegang H."/>
            <person name="Johann A."/>
            <person name="Lienard T."/>
            <person name="Gohl O."/>
            <person name="Martinez-Arias R."/>
            <person name="Jacobi C."/>
            <person name="Starkuviene V."/>
            <person name="Schlenczeck S."/>
            <person name="Dencker S."/>
            <person name="Huber R."/>
            <person name="Klenk H.-P."/>
            <person name="Kramer W."/>
            <person name="Merkl R."/>
            <person name="Gottschalk G."/>
            <person name="Fritz H.-J."/>
        </authorList>
    </citation>
    <scope>NUCLEOTIDE SEQUENCE [LARGE SCALE GENOMIC DNA]</scope>
    <source>
        <strain>ATCC BAA-163 / DSM 7039 / HB27</strain>
    </source>
</reference>
<dbReference type="EMBL" id="AE017221">
    <property type="protein sequence ID" value="AAS81644.1"/>
    <property type="molecule type" value="Genomic_DNA"/>
</dbReference>
<dbReference type="RefSeq" id="WP_008633365.1">
    <property type="nucleotide sequence ID" value="NC_005835.1"/>
</dbReference>
<dbReference type="PDB" id="4KVB">
    <property type="method" value="X-ray"/>
    <property type="resolution" value="4.20 A"/>
    <property type="chains" value="K=1-129"/>
</dbReference>
<dbReference type="PDB" id="4V4I">
    <property type="method" value="X-ray"/>
    <property type="resolution" value="3.71 A"/>
    <property type="chains" value="l=1-129"/>
</dbReference>
<dbReference type="PDB" id="4V4J">
    <property type="method" value="X-ray"/>
    <property type="resolution" value="3.83 A"/>
    <property type="chains" value="l=1-129"/>
</dbReference>
<dbReference type="PDB" id="4V63">
    <property type="method" value="X-ray"/>
    <property type="resolution" value="3.21 A"/>
    <property type="chains" value="AK/CK=1-129"/>
</dbReference>
<dbReference type="PDB" id="4V67">
    <property type="method" value="X-ray"/>
    <property type="resolution" value="3.00 A"/>
    <property type="chains" value="AK/CK=1-129"/>
</dbReference>
<dbReference type="PDB" id="4V7P">
    <property type="method" value="X-ray"/>
    <property type="resolution" value="3.62 A"/>
    <property type="chains" value="AK/DK=11-129"/>
</dbReference>
<dbReference type="PDB" id="4V83">
    <property type="method" value="X-ray"/>
    <property type="resolution" value="3.50 A"/>
    <property type="chains" value="AK/CK=11-129"/>
</dbReference>
<dbReference type="PDB" id="4V84">
    <property type="method" value="X-ray"/>
    <property type="resolution" value="3.40 A"/>
    <property type="chains" value="AK/CK=11-129"/>
</dbReference>
<dbReference type="PDB" id="4V9J">
    <property type="method" value="X-ray"/>
    <property type="resolution" value="3.86 A"/>
    <property type="chains" value="AK/CK=11-129"/>
</dbReference>
<dbReference type="PDB" id="4V9K">
    <property type="method" value="X-ray"/>
    <property type="resolution" value="3.50 A"/>
    <property type="chains" value="AK/CK=11-129"/>
</dbReference>
<dbReference type="PDB" id="4V9L">
    <property type="method" value="X-ray"/>
    <property type="resolution" value="3.50 A"/>
    <property type="chains" value="AK/CK=11-129"/>
</dbReference>
<dbReference type="PDB" id="4V9M">
    <property type="method" value="X-ray"/>
    <property type="resolution" value="4.00 A"/>
    <property type="chains" value="AK/CK=11-129"/>
</dbReference>
<dbReference type="PDB" id="4V9N">
    <property type="method" value="X-ray"/>
    <property type="resolution" value="3.40 A"/>
    <property type="chains" value="AK/CK=11-124"/>
</dbReference>
<dbReference type="PDB" id="4V9Q">
    <property type="method" value="X-ray"/>
    <property type="resolution" value="3.40 A"/>
    <property type="chains" value="BK/DK=11-124"/>
</dbReference>
<dbReference type="PDB" id="4W29">
    <property type="method" value="X-ray"/>
    <property type="resolution" value="3.80 A"/>
    <property type="chains" value="AK/CK=11-129"/>
</dbReference>
<dbReference type="PDB" id="4XEJ">
    <property type="method" value="X-ray"/>
    <property type="resolution" value="3.80 A"/>
    <property type="chains" value="AS11/BS11=11-124"/>
</dbReference>
<dbReference type="PDB" id="5J4D">
    <property type="method" value="X-ray"/>
    <property type="resolution" value="3.10 A"/>
    <property type="chains" value="TA/YC=1-129"/>
</dbReference>
<dbReference type="PDB" id="5V8I">
    <property type="method" value="X-ray"/>
    <property type="resolution" value="3.25 A"/>
    <property type="chains" value="1k/2k=1-129"/>
</dbReference>
<dbReference type="PDB" id="6B4V">
    <property type="method" value="X-ray"/>
    <property type="resolution" value="3.40 A"/>
    <property type="chains" value="TA/XC=1-129"/>
</dbReference>
<dbReference type="PDB" id="6BOH">
    <property type="method" value="X-ray"/>
    <property type="resolution" value="3.40 A"/>
    <property type="chains" value="UA/ZC=1-129"/>
</dbReference>
<dbReference type="PDB" id="6BOK">
    <property type="method" value="X-ray"/>
    <property type="resolution" value="3.55 A"/>
    <property type="chains" value="SA/VC=1-129"/>
</dbReference>
<dbReference type="PDB" id="6N1D">
    <property type="method" value="X-ray"/>
    <property type="resolution" value="3.20 A"/>
    <property type="chains" value="AS11/BS11=2-129"/>
</dbReference>
<dbReference type="PDBsum" id="4KVB"/>
<dbReference type="PDBsum" id="4V4I"/>
<dbReference type="PDBsum" id="4V4J"/>
<dbReference type="PDBsum" id="4V63"/>
<dbReference type="PDBsum" id="4V67"/>
<dbReference type="PDBsum" id="4V7P"/>
<dbReference type="PDBsum" id="4V83"/>
<dbReference type="PDBsum" id="4V84"/>
<dbReference type="PDBsum" id="4V9J"/>
<dbReference type="PDBsum" id="4V9K"/>
<dbReference type="PDBsum" id="4V9L"/>
<dbReference type="PDBsum" id="4V9M"/>
<dbReference type="PDBsum" id="4V9N"/>
<dbReference type="PDBsum" id="4V9Q"/>
<dbReference type="PDBsum" id="4W29"/>
<dbReference type="PDBsum" id="4XEJ"/>
<dbReference type="PDBsum" id="5J4D"/>
<dbReference type="PDBsum" id="5V8I"/>
<dbReference type="PDBsum" id="6B4V"/>
<dbReference type="PDBsum" id="6BOH"/>
<dbReference type="PDBsum" id="6BOK"/>
<dbReference type="PDBsum" id="6N1D"/>
<dbReference type="SMR" id="P62654"/>
<dbReference type="IntAct" id="P62654">
    <property type="interactions" value="4"/>
</dbReference>
<dbReference type="GeneID" id="3168024"/>
<dbReference type="KEGG" id="tth:TT_C1302"/>
<dbReference type="eggNOG" id="COG0100">
    <property type="taxonomic scope" value="Bacteria"/>
</dbReference>
<dbReference type="HOGENOM" id="CLU_072439_5_0_0"/>
<dbReference type="OrthoDB" id="9806415at2"/>
<dbReference type="EvolutionaryTrace" id="P62654"/>
<dbReference type="Proteomes" id="UP000000592">
    <property type="component" value="Chromosome"/>
</dbReference>
<dbReference type="GO" id="GO:1990904">
    <property type="term" value="C:ribonucleoprotein complex"/>
    <property type="evidence" value="ECO:0007669"/>
    <property type="project" value="UniProtKB-KW"/>
</dbReference>
<dbReference type="GO" id="GO:0005840">
    <property type="term" value="C:ribosome"/>
    <property type="evidence" value="ECO:0007669"/>
    <property type="project" value="UniProtKB-KW"/>
</dbReference>
<dbReference type="GO" id="GO:0019843">
    <property type="term" value="F:rRNA binding"/>
    <property type="evidence" value="ECO:0007669"/>
    <property type="project" value="UniProtKB-UniRule"/>
</dbReference>
<dbReference type="GO" id="GO:0003735">
    <property type="term" value="F:structural constituent of ribosome"/>
    <property type="evidence" value="ECO:0007669"/>
    <property type="project" value="InterPro"/>
</dbReference>
<dbReference type="GO" id="GO:0006412">
    <property type="term" value="P:translation"/>
    <property type="evidence" value="ECO:0007669"/>
    <property type="project" value="UniProtKB-UniRule"/>
</dbReference>
<dbReference type="FunFam" id="3.30.420.80:FF:000010">
    <property type="entry name" value="30S ribosomal protein S11"/>
    <property type="match status" value="1"/>
</dbReference>
<dbReference type="Gene3D" id="3.30.420.80">
    <property type="entry name" value="Ribosomal protein S11"/>
    <property type="match status" value="1"/>
</dbReference>
<dbReference type="HAMAP" id="MF_01310">
    <property type="entry name" value="Ribosomal_uS11"/>
    <property type="match status" value="1"/>
</dbReference>
<dbReference type="InterPro" id="IPR001971">
    <property type="entry name" value="Ribosomal_uS11"/>
</dbReference>
<dbReference type="InterPro" id="IPR019981">
    <property type="entry name" value="Ribosomal_uS11_bac-type"/>
</dbReference>
<dbReference type="InterPro" id="IPR018102">
    <property type="entry name" value="Ribosomal_uS11_CS"/>
</dbReference>
<dbReference type="InterPro" id="IPR036967">
    <property type="entry name" value="Ribosomal_uS11_sf"/>
</dbReference>
<dbReference type="NCBIfam" id="NF003698">
    <property type="entry name" value="PRK05309.1"/>
    <property type="match status" value="1"/>
</dbReference>
<dbReference type="NCBIfam" id="TIGR03632">
    <property type="entry name" value="uS11_bact"/>
    <property type="match status" value="1"/>
</dbReference>
<dbReference type="PANTHER" id="PTHR11759">
    <property type="entry name" value="40S RIBOSOMAL PROTEIN S14/30S RIBOSOMAL PROTEIN S11"/>
    <property type="match status" value="1"/>
</dbReference>
<dbReference type="Pfam" id="PF00411">
    <property type="entry name" value="Ribosomal_S11"/>
    <property type="match status" value="1"/>
</dbReference>
<dbReference type="PIRSF" id="PIRSF002131">
    <property type="entry name" value="Ribosomal_S11"/>
    <property type="match status" value="1"/>
</dbReference>
<dbReference type="SUPFAM" id="SSF53137">
    <property type="entry name" value="Translational machinery components"/>
    <property type="match status" value="1"/>
</dbReference>
<dbReference type="PROSITE" id="PS00054">
    <property type="entry name" value="RIBOSOMAL_S11"/>
    <property type="match status" value="1"/>
</dbReference>
<organism>
    <name type="scientific">Thermus thermophilus (strain ATCC BAA-163 / DSM 7039 / HB27)</name>
    <dbReference type="NCBI Taxonomy" id="262724"/>
    <lineage>
        <taxon>Bacteria</taxon>
        <taxon>Thermotogati</taxon>
        <taxon>Deinococcota</taxon>
        <taxon>Deinococci</taxon>
        <taxon>Thermales</taxon>
        <taxon>Thermaceae</taxon>
        <taxon>Thermus</taxon>
    </lineage>
</organism>
<name>RS11_THET2</name>